<gene>
    <name evidence="1" type="primary">nuoK</name>
    <name type="ordered locus">BAA_5563</name>
</gene>
<reference key="1">
    <citation type="submission" date="2009-04" db="EMBL/GenBank/DDBJ databases">
        <title>Genome sequence of Bacillus anthracis A0248.</title>
        <authorList>
            <person name="Dodson R.J."/>
            <person name="Munk A.C."/>
            <person name="Bruce D."/>
            <person name="Detter C."/>
            <person name="Tapia R."/>
            <person name="Sutton G."/>
            <person name="Sims D."/>
            <person name="Brettin T."/>
        </authorList>
    </citation>
    <scope>NUCLEOTIDE SEQUENCE [LARGE SCALE GENOMIC DNA]</scope>
    <source>
        <strain>A0248</strain>
    </source>
</reference>
<protein>
    <recommendedName>
        <fullName evidence="1">NADH-quinone oxidoreductase subunit K</fullName>
        <ecNumber evidence="1">7.1.1.-</ecNumber>
    </recommendedName>
    <alternativeName>
        <fullName evidence="1">NADH dehydrogenase I subunit K</fullName>
    </alternativeName>
    <alternativeName>
        <fullName evidence="1">NDH-1 subunit K</fullName>
    </alternativeName>
</protein>
<organism>
    <name type="scientific">Bacillus anthracis (strain A0248)</name>
    <dbReference type="NCBI Taxonomy" id="592021"/>
    <lineage>
        <taxon>Bacteria</taxon>
        <taxon>Bacillati</taxon>
        <taxon>Bacillota</taxon>
        <taxon>Bacilli</taxon>
        <taxon>Bacillales</taxon>
        <taxon>Bacillaceae</taxon>
        <taxon>Bacillus</taxon>
        <taxon>Bacillus cereus group</taxon>
    </lineage>
</organism>
<dbReference type="EC" id="7.1.1.-" evidence="1"/>
<dbReference type="EMBL" id="CP001598">
    <property type="protein sequence ID" value="ACQ49551.1"/>
    <property type="molecule type" value="Genomic_DNA"/>
</dbReference>
<dbReference type="RefSeq" id="WP_000100076.1">
    <property type="nucleotide sequence ID" value="NC_012659.1"/>
</dbReference>
<dbReference type="SMR" id="C3P1E2"/>
<dbReference type="GeneID" id="45025123"/>
<dbReference type="KEGG" id="bai:BAA_5563"/>
<dbReference type="HOGENOM" id="CLU_144724_0_0_9"/>
<dbReference type="GO" id="GO:0030964">
    <property type="term" value="C:NADH dehydrogenase complex"/>
    <property type="evidence" value="ECO:0007669"/>
    <property type="project" value="TreeGrafter"/>
</dbReference>
<dbReference type="GO" id="GO:0005886">
    <property type="term" value="C:plasma membrane"/>
    <property type="evidence" value="ECO:0007669"/>
    <property type="project" value="UniProtKB-SubCell"/>
</dbReference>
<dbReference type="GO" id="GO:0050136">
    <property type="term" value="F:NADH:ubiquinone reductase (non-electrogenic) activity"/>
    <property type="evidence" value="ECO:0007669"/>
    <property type="project" value="UniProtKB-UniRule"/>
</dbReference>
<dbReference type="GO" id="GO:0048038">
    <property type="term" value="F:quinone binding"/>
    <property type="evidence" value="ECO:0007669"/>
    <property type="project" value="UniProtKB-KW"/>
</dbReference>
<dbReference type="GO" id="GO:0042773">
    <property type="term" value="P:ATP synthesis coupled electron transport"/>
    <property type="evidence" value="ECO:0007669"/>
    <property type="project" value="InterPro"/>
</dbReference>
<dbReference type="FunFam" id="1.10.287.3510:FF:000001">
    <property type="entry name" value="NADH-quinone oxidoreductase subunit K"/>
    <property type="match status" value="1"/>
</dbReference>
<dbReference type="Gene3D" id="1.10.287.3510">
    <property type="match status" value="1"/>
</dbReference>
<dbReference type="HAMAP" id="MF_01456">
    <property type="entry name" value="NDH1_NuoK"/>
    <property type="match status" value="1"/>
</dbReference>
<dbReference type="InterPro" id="IPR001133">
    <property type="entry name" value="NADH_UbQ_OxRdtase_chain4L/K"/>
</dbReference>
<dbReference type="InterPro" id="IPR039428">
    <property type="entry name" value="NUOK/Mnh_C1-like"/>
</dbReference>
<dbReference type="NCBIfam" id="NF004320">
    <property type="entry name" value="PRK05715.1-2"/>
    <property type="match status" value="1"/>
</dbReference>
<dbReference type="NCBIfam" id="NF004321">
    <property type="entry name" value="PRK05715.1-3"/>
    <property type="match status" value="1"/>
</dbReference>
<dbReference type="NCBIfam" id="NF004322">
    <property type="entry name" value="PRK05715.1-4"/>
    <property type="match status" value="1"/>
</dbReference>
<dbReference type="NCBIfam" id="NF004323">
    <property type="entry name" value="PRK05715.1-5"/>
    <property type="match status" value="1"/>
</dbReference>
<dbReference type="PANTHER" id="PTHR11434:SF16">
    <property type="entry name" value="NADH-UBIQUINONE OXIDOREDUCTASE CHAIN 4L"/>
    <property type="match status" value="1"/>
</dbReference>
<dbReference type="PANTHER" id="PTHR11434">
    <property type="entry name" value="NADH-UBIQUINONE OXIDOREDUCTASE SUBUNIT ND4L"/>
    <property type="match status" value="1"/>
</dbReference>
<dbReference type="Pfam" id="PF00420">
    <property type="entry name" value="Oxidored_q2"/>
    <property type="match status" value="1"/>
</dbReference>
<comment type="function">
    <text evidence="1">NDH-1 shuttles electrons from NADH, via FMN and iron-sulfur (Fe-S) centers, to quinones in the respiratory chain. The immediate electron acceptor for the enzyme in this species is believed to be a menaquinone. Couples the redox reaction to proton translocation (for every two electrons transferred, four hydrogen ions are translocated across the cytoplasmic membrane), and thus conserves the redox energy in a proton gradient.</text>
</comment>
<comment type="catalytic activity">
    <reaction evidence="1">
        <text>a quinone + NADH + 5 H(+)(in) = a quinol + NAD(+) + 4 H(+)(out)</text>
        <dbReference type="Rhea" id="RHEA:57888"/>
        <dbReference type="ChEBI" id="CHEBI:15378"/>
        <dbReference type="ChEBI" id="CHEBI:24646"/>
        <dbReference type="ChEBI" id="CHEBI:57540"/>
        <dbReference type="ChEBI" id="CHEBI:57945"/>
        <dbReference type="ChEBI" id="CHEBI:132124"/>
    </reaction>
</comment>
<comment type="subunit">
    <text evidence="1">NDH-1 is composed of 14 different subunits. Subunits NuoA, H, J, K, L, M, N constitute the membrane sector of the complex.</text>
</comment>
<comment type="subcellular location">
    <subcellularLocation>
        <location evidence="1">Cell membrane</location>
        <topology evidence="1">Multi-pass membrane protein</topology>
    </subcellularLocation>
</comment>
<comment type="similarity">
    <text evidence="1">Belongs to the complex I subunit 4L family.</text>
</comment>
<evidence type="ECO:0000255" key="1">
    <source>
        <dbReference type="HAMAP-Rule" id="MF_01456"/>
    </source>
</evidence>
<keyword id="KW-1003">Cell membrane</keyword>
<keyword id="KW-0472">Membrane</keyword>
<keyword id="KW-0520">NAD</keyword>
<keyword id="KW-0874">Quinone</keyword>
<keyword id="KW-1278">Translocase</keyword>
<keyword id="KW-0812">Transmembrane</keyword>
<keyword id="KW-1133">Transmembrane helix</keyword>
<keyword id="KW-0813">Transport</keyword>
<name>NUOK_BACAA</name>
<accession>C3P1E2</accession>
<sequence length="104" mass="11094">MSSVPASAYLTLAIILFCIGLFGALTKRNTVIVLVCIELMLNAANLNFVAFSKLGLFPNLTGQIFSLFTMAVAAAEAAVGLAILIALYRNRTTVHVDEMDTLKG</sequence>
<feature type="chain" id="PRO_0000389938" description="NADH-quinone oxidoreductase subunit K">
    <location>
        <begin position="1"/>
        <end position="104"/>
    </location>
</feature>
<feature type="transmembrane region" description="Helical" evidence="1">
    <location>
        <begin position="4"/>
        <end position="24"/>
    </location>
</feature>
<feature type="transmembrane region" description="Helical" evidence="1">
    <location>
        <begin position="31"/>
        <end position="51"/>
    </location>
</feature>
<feature type="transmembrane region" description="Helical" evidence="1">
    <location>
        <begin position="67"/>
        <end position="87"/>
    </location>
</feature>
<proteinExistence type="inferred from homology"/>